<gene>
    <name evidence="1" type="primary">atpB</name>
    <name type="ordered locus">ECDH10B_3925</name>
</gene>
<feature type="chain" id="PRO_0000362300" description="ATP synthase subunit a">
    <location>
        <begin position="1"/>
        <end position="271"/>
    </location>
</feature>
<feature type="transmembrane region" description="Helical" evidence="1">
    <location>
        <begin position="40"/>
        <end position="60"/>
    </location>
</feature>
<feature type="transmembrane region" description="Helical" evidence="1">
    <location>
        <begin position="100"/>
        <end position="120"/>
    </location>
</feature>
<feature type="transmembrane region" description="Helical" evidence="1">
    <location>
        <begin position="146"/>
        <end position="166"/>
    </location>
</feature>
<feature type="transmembrane region" description="Helical" evidence="1">
    <location>
        <begin position="220"/>
        <end position="240"/>
    </location>
</feature>
<feature type="transmembrane region" description="Helical" evidence="1">
    <location>
        <begin position="242"/>
        <end position="262"/>
    </location>
</feature>
<comment type="function">
    <text evidence="1">Key component of the proton channel; it plays a direct role in the translocation of protons across the membrane.</text>
</comment>
<comment type="subunit">
    <text evidence="1">F-type ATPases have 2 components, CF(1) - the catalytic core - and CF(0) - the membrane proton channel. CF(1) has five subunits: alpha(3), beta(3), gamma(1), delta(1), epsilon(1). CF(0) has three main subunits: a(1), b(2) and c(9-12). The alpha and beta chains form an alternating ring which encloses part of the gamma chain. CF(1) is attached to CF(0) by a central stalk formed by the gamma and epsilon chains, while a peripheral stalk is formed by the delta and b chains.</text>
</comment>
<comment type="subcellular location">
    <subcellularLocation>
        <location evidence="1">Cell inner membrane</location>
        <topology evidence="1">Multi-pass membrane protein</topology>
    </subcellularLocation>
</comment>
<comment type="similarity">
    <text evidence="1">Belongs to the ATPase A chain family.</text>
</comment>
<reference key="1">
    <citation type="journal article" date="2008" name="J. Bacteriol.">
        <title>The complete genome sequence of Escherichia coli DH10B: insights into the biology of a laboratory workhorse.</title>
        <authorList>
            <person name="Durfee T."/>
            <person name="Nelson R."/>
            <person name="Baldwin S."/>
            <person name="Plunkett G. III"/>
            <person name="Burland V."/>
            <person name="Mau B."/>
            <person name="Petrosino J.F."/>
            <person name="Qin X."/>
            <person name="Muzny D.M."/>
            <person name="Ayele M."/>
            <person name="Gibbs R.A."/>
            <person name="Csorgo B."/>
            <person name="Posfai G."/>
            <person name="Weinstock G.M."/>
            <person name="Blattner F.R."/>
        </authorList>
    </citation>
    <scope>NUCLEOTIDE SEQUENCE [LARGE SCALE GENOMIC DNA]</scope>
    <source>
        <strain>K12 / DH10B</strain>
    </source>
</reference>
<protein>
    <recommendedName>
        <fullName evidence="1">ATP synthase subunit a</fullName>
    </recommendedName>
    <alternativeName>
        <fullName evidence="1">ATP synthase F0 sector subunit a</fullName>
    </alternativeName>
    <alternativeName>
        <fullName evidence="1">F-ATPase subunit 6</fullName>
    </alternativeName>
</protein>
<evidence type="ECO:0000255" key="1">
    <source>
        <dbReference type="HAMAP-Rule" id="MF_01393"/>
    </source>
</evidence>
<name>ATP6_ECODH</name>
<accession>B1X9W6</accession>
<proteinExistence type="inferred from homology"/>
<sequence length="271" mass="30303">MASENMTPQDYIGHHLNNLQLDLRTFSLVDPQNPPATFWTINIDSMFFSVVLGLLFLVLFRSVAKKATSGVPGKFQTAIELVIGFVNGSVKDMYHGKSKLIAPLALTIFVWVFLMNLMDLLPIDLLPYIAEHVLGLPALRVVPSADVNVTLSMALGVFILILFYSIKMKGIGGFTKELTLQPFNHWAFIPVNLILEGVSLLSKPVSLGLRLFGNMYAGELIFILIAGLLPWWSQWILNVPWAIFHILIITLQAFIFMVLTIVYLSMASEEH</sequence>
<organism>
    <name type="scientific">Escherichia coli (strain K12 / DH10B)</name>
    <dbReference type="NCBI Taxonomy" id="316385"/>
    <lineage>
        <taxon>Bacteria</taxon>
        <taxon>Pseudomonadati</taxon>
        <taxon>Pseudomonadota</taxon>
        <taxon>Gammaproteobacteria</taxon>
        <taxon>Enterobacterales</taxon>
        <taxon>Enterobacteriaceae</taxon>
        <taxon>Escherichia</taxon>
    </lineage>
</organism>
<dbReference type="EMBL" id="CP000948">
    <property type="protein sequence ID" value="ACB04781.1"/>
    <property type="molecule type" value="Genomic_DNA"/>
</dbReference>
<dbReference type="RefSeq" id="WP_000135625.1">
    <property type="nucleotide sequence ID" value="NC_010473.1"/>
</dbReference>
<dbReference type="SMR" id="B1X9W6"/>
<dbReference type="GeneID" id="93778229"/>
<dbReference type="KEGG" id="ecd:ECDH10B_3925"/>
<dbReference type="HOGENOM" id="CLU_041018_1_0_6"/>
<dbReference type="GO" id="GO:0005886">
    <property type="term" value="C:plasma membrane"/>
    <property type="evidence" value="ECO:0007669"/>
    <property type="project" value="UniProtKB-SubCell"/>
</dbReference>
<dbReference type="GO" id="GO:0045259">
    <property type="term" value="C:proton-transporting ATP synthase complex"/>
    <property type="evidence" value="ECO:0007669"/>
    <property type="project" value="UniProtKB-KW"/>
</dbReference>
<dbReference type="GO" id="GO:0046933">
    <property type="term" value="F:proton-transporting ATP synthase activity, rotational mechanism"/>
    <property type="evidence" value="ECO:0007669"/>
    <property type="project" value="UniProtKB-UniRule"/>
</dbReference>
<dbReference type="GO" id="GO:0042777">
    <property type="term" value="P:proton motive force-driven plasma membrane ATP synthesis"/>
    <property type="evidence" value="ECO:0007669"/>
    <property type="project" value="TreeGrafter"/>
</dbReference>
<dbReference type="CDD" id="cd00310">
    <property type="entry name" value="ATP-synt_Fo_a_6"/>
    <property type="match status" value="1"/>
</dbReference>
<dbReference type="FunFam" id="1.20.120.220:FF:000002">
    <property type="entry name" value="ATP synthase subunit a"/>
    <property type="match status" value="1"/>
</dbReference>
<dbReference type="Gene3D" id="1.20.120.220">
    <property type="entry name" value="ATP synthase, F0 complex, subunit A"/>
    <property type="match status" value="1"/>
</dbReference>
<dbReference type="HAMAP" id="MF_01393">
    <property type="entry name" value="ATP_synth_a_bact"/>
    <property type="match status" value="1"/>
</dbReference>
<dbReference type="InterPro" id="IPR045082">
    <property type="entry name" value="ATP_syn_F0_a_bact/chloroplast"/>
</dbReference>
<dbReference type="InterPro" id="IPR000568">
    <property type="entry name" value="ATP_synth_F0_asu"/>
</dbReference>
<dbReference type="InterPro" id="IPR023011">
    <property type="entry name" value="ATP_synth_F0_asu_AS"/>
</dbReference>
<dbReference type="InterPro" id="IPR035908">
    <property type="entry name" value="F0_ATP_A_sf"/>
</dbReference>
<dbReference type="NCBIfam" id="TIGR01131">
    <property type="entry name" value="ATP_synt_6_or_A"/>
    <property type="match status" value="1"/>
</dbReference>
<dbReference type="NCBIfam" id="NF004477">
    <property type="entry name" value="PRK05815.1-1"/>
    <property type="match status" value="1"/>
</dbReference>
<dbReference type="PANTHER" id="PTHR42823">
    <property type="entry name" value="ATP SYNTHASE SUBUNIT A, CHLOROPLASTIC"/>
    <property type="match status" value="1"/>
</dbReference>
<dbReference type="PANTHER" id="PTHR42823:SF3">
    <property type="entry name" value="ATP SYNTHASE SUBUNIT A, CHLOROPLASTIC"/>
    <property type="match status" value="1"/>
</dbReference>
<dbReference type="Pfam" id="PF00119">
    <property type="entry name" value="ATP-synt_A"/>
    <property type="match status" value="1"/>
</dbReference>
<dbReference type="PRINTS" id="PR00123">
    <property type="entry name" value="ATPASEA"/>
</dbReference>
<dbReference type="SUPFAM" id="SSF81336">
    <property type="entry name" value="F1F0 ATP synthase subunit A"/>
    <property type="match status" value="1"/>
</dbReference>
<dbReference type="PROSITE" id="PS00449">
    <property type="entry name" value="ATPASE_A"/>
    <property type="match status" value="1"/>
</dbReference>
<keyword id="KW-0066">ATP synthesis</keyword>
<keyword id="KW-0997">Cell inner membrane</keyword>
<keyword id="KW-1003">Cell membrane</keyword>
<keyword id="KW-0138">CF(0)</keyword>
<keyword id="KW-0375">Hydrogen ion transport</keyword>
<keyword id="KW-0406">Ion transport</keyword>
<keyword id="KW-0472">Membrane</keyword>
<keyword id="KW-0812">Transmembrane</keyword>
<keyword id="KW-1133">Transmembrane helix</keyword>
<keyword id="KW-0813">Transport</keyword>